<name>COX19_EREGS</name>
<protein>
    <recommendedName>
        <fullName>Cytochrome c oxidase assembly protein COX19</fullName>
    </recommendedName>
</protein>
<gene>
    <name type="primary">COX19</name>
    <name type="ordered locus">ADL041C</name>
</gene>
<feature type="chain" id="PRO_0000122284" description="Cytochrome c oxidase assembly protein COX19">
    <location>
        <begin position="1"/>
        <end position="99"/>
    </location>
</feature>
<feature type="domain" description="CHCH" evidence="2">
    <location>
        <begin position="27"/>
        <end position="70"/>
    </location>
</feature>
<feature type="region of interest" description="Disordered" evidence="3">
    <location>
        <begin position="1"/>
        <end position="26"/>
    </location>
</feature>
<feature type="region of interest" description="Disordered" evidence="3">
    <location>
        <begin position="77"/>
        <end position="99"/>
    </location>
</feature>
<feature type="short sequence motif" description="Cx9C motif 1" evidence="2">
    <location>
        <begin position="30"/>
        <end position="40"/>
    </location>
</feature>
<feature type="short sequence motif" description="Cx9C motif 2" evidence="2">
    <location>
        <begin position="52"/>
        <end position="62"/>
    </location>
</feature>
<feature type="compositionally biased region" description="Polar residues" evidence="3">
    <location>
        <begin position="1"/>
        <end position="13"/>
    </location>
</feature>
<feature type="compositionally biased region" description="Basic and acidic residues" evidence="3">
    <location>
        <begin position="77"/>
        <end position="86"/>
    </location>
</feature>
<feature type="compositionally biased region" description="Low complexity" evidence="3">
    <location>
        <begin position="87"/>
        <end position="99"/>
    </location>
</feature>
<feature type="disulfide bond" evidence="2">
    <location>
        <begin position="30"/>
        <end position="62"/>
    </location>
</feature>
<feature type="disulfide bond" evidence="2">
    <location>
        <begin position="40"/>
        <end position="52"/>
    </location>
</feature>
<dbReference type="EMBL" id="AE016817">
    <property type="protein sequence ID" value="AAS51879.2"/>
    <property type="molecule type" value="Genomic_DNA"/>
</dbReference>
<dbReference type="RefSeq" id="NP_984055.2">
    <property type="nucleotide sequence ID" value="NM_209408.2"/>
</dbReference>
<dbReference type="SMR" id="Q75AF9"/>
<dbReference type="FunCoup" id="Q75AF9">
    <property type="interactions" value="314"/>
</dbReference>
<dbReference type="STRING" id="284811.Q75AF9"/>
<dbReference type="EnsemblFungi" id="AAS51879">
    <property type="protein sequence ID" value="AAS51879"/>
    <property type="gene ID" value="AGOS_ADL041C"/>
</dbReference>
<dbReference type="GeneID" id="4620203"/>
<dbReference type="KEGG" id="ago:AGOS_ADL041C"/>
<dbReference type="eggNOG" id="KOG3477">
    <property type="taxonomic scope" value="Eukaryota"/>
</dbReference>
<dbReference type="HOGENOM" id="CLU_141947_3_1_1"/>
<dbReference type="InParanoid" id="Q75AF9"/>
<dbReference type="OMA" id="GTNDEAC"/>
<dbReference type="OrthoDB" id="268594at2759"/>
<dbReference type="Proteomes" id="UP000000591">
    <property type="component" value="Chromosome IV"/>
</dbReference>
<dbReference type="GO" id="GO:0005758">
    <property type="term" value="C:mitochondrial intermembrane space"/>
    <property type="evidence" value="ECO:0000318"/>
    <property type="project" value="GO_Central"/>
</dbReference>
<dbReference type="GO" id="GO:0033617">
    <property type="term" value="P:mitochondrial cytochrome c oxidase assembly"/>
    <property type="evidence" value="ECO:0000318"/>
    <property type="project" value="GO_Central"/>
</dbReference>
<dbReference type="InterPro" id="IPR051383">
    <property type="entry name" value="COX19"/>
</dbReference>
<dbReference type="PANTHER" id="PTHR21107">
    <property type="entry name" value="CYTOCHROME C OXIDASE ASSEMBLY PROTEIN COX19"/>
    <property type="match status" value="1"/>
</dbReference>
<dbReference type="PANTHER" id="PTHR21107:SF2">
    <property type="entry name" value="CYTOCHROME C OXIDASE ASSEMBLY PROTEIN COX19"/>
    <property type="match status" value="1"/>
</dbReference>
<dbReference type="PROSITE" id="PS51808">
    <property type="entry name" value="CHCH"/>
    <property type="match status" value="1"/>
</dbReference>
<accession>Q75AF9</accession>
<reference key="1">
    <citation type="journal article" date="2004" name="Science">
        <title>The Ashbya gossypii genome as a tool for mapping the ancient Saccharomyces cerevisiae genome.</title>
        <authorList>
            <person name="Dietrich F.S."/>
            <person name="Voegeli S."/>
            <person name="Brachat S."/>
            <person name="Lerch A."/>
            <person name="Gates K."/>
            <person name="Steiner S."/>
            <person name="Mohr C."/>
            <person name="Poehlmann R."/>
            <person name="Luedi P."/>
            <person name="Choi S."/>
            <person name="Wing R.A."/>
            <person name="Flavier A."/>
            <person name="Gaffney T.D."/>
            <person name="Philippsen P."/>
        </authorList>
    </citation>
    <scope>NUCLEOTIDE SEQUENCE [LARGE SCALE GENOMIC DNA]</scope>
    <source>
        <strain>ATCC 10895 / CBS 109.51 / FGSC 9923 / NRRL Y-1056</strain>
    </source>
</reference>
<reference key="2">
    <citation type="journal article" date="2013" name="G3 (Bethesda)">
        <title>Genomes of Ashbya fungi isolated from insects reveal four mating-type loci, numerous translocations, lack of transposons, and distinct gene duplications.</title>
        <authorList>
            <person name="Dietrich F.S."/>
            <person name="Voegeli S."/>
            <person name="Kuo S."/>
            <person name="Philippsen P."/>
        </authorList>
    </citation>
    <scope>GENOME REANNOTATION</scope>
    <scope>SEQUENCE REVISION TO 6; 17; 21; 33 AND 56</scope>
    <source>
        <strain>ATCC 10895 / CBS 109.51 / FGSC 9923 / NRRL Y-1056</strain>
    </source>
</reference>
<proteinExistence type="inferred from homology"/>
<comment type="function">
    <text evidence="1">Required for the assembly of mitochondrial cytochrome c oxidase.</text>
</comment>
<comment type="subcellular location">
    <subcellularLocation>
        <location evidence="1">Cytoplasm</location>
    </subcellularLocation>
    <subcellularLocation>
        <location evidence="1">Mitochondrion intermembrane space</location>
    </subcellularLocation>
</comment>
<comment type="similarity">
    <text evidence="4">Belongs to the COX19 family.</text>
</comment>
<evidence type="ECO:0000250" key="1"/>
<evidence type="ECO:0000255" key="2">
    <source>
        <dbReference type="PROSITE-ProRule" id="PRU01150"/>
    </source>
</evidence>
<evidence type="ECO:0000256" key="3">
    <source>
        <dbReference type="SAM" id="MobiDB-lite"/>
    </source>
</evidence>
<evidence type="ECO:0000305" key="4"/>
<keyword id="KW-0963">Cytoplasm</keyword>
<keyword id="KW-1015">Disulfide bond</keyword>
<keyword id="KW-0496">Mitochondrion</keyword>
<keyword id="KW-1185">Reference proteome</keyword>
<sequence>MSGNPGSALQALSPTPPERGSFPLDHEGECTAQMMEYLNCMKLVRGENAPNCRLLARNYLKCRMDHRLMDRDEWAHLGLPDDKRAEAAASADSARPPRQ</sequence>
<organism>
    <name type="scientific">Eremothecium gossypii (strain ATCC 10895 / CBS 109.51 / FGSC 9923 / NRRL Y-1056)</name>
    <name type="common">Yeast</name>
    <name type="synonym">Ashbya gossypii</name>
    <dbReference type="NCBI Taxonomy" id="284811"/>
    <lineage>
        <taxon>Eukaryota</taxon>
        <taxon>Fungi</taxon>
        <taxon>Dikarya</taxon>
        <taxon>Ascomycota</taxon>
        <taxon>Saccharomycotina</taxon>
        <taxon>Saccharomycetes</taxon>
        <taxon>Saccharomycetales</taxon>
        <taxon>Saccharomycetaceae</taxon>
        <taxon>Eremothecium</taxon>
    </lineage>
</organism>